<organism>
    <name type="scientific">Synechococcus sp. (strain CC9902)</name>
    <dbReference type="NCBI Taxonomy" id="316279"/>
    <lineage>
        <taxon>Bacteria</taxon>
        <taxon>Bacillati</taxon>
        <taxon>Cyanobacteriota</taxon>
        <taxon>Cyanophyceae</taxon>
        <taxon>Synechococcales</taxon>
        <taxon>Synechococcaceae</taxon>
        <taxon>Synechococcus</taxon>
    </lineage>
</organism>
<evidence type="ECO:0000255" key="1">
    <source>
        <dbReference type="HAMAP-Rule" id="MF_01682"/>
    </source>
</evidence>
<evidence type="ECO:0000256" key="2">
    <source>
        <dbReference type="SAM" id="MobiDB-lite"/>
    </source>
</evidence>
<dbReference type="EC" id="1.13.11.54" evidence="1"/>
<dbReference type="EC" id="1.13.11.53" evidence="1"/>
<dbReference type="EMBL" id="CP000097">
    <property type="protein sequence ID" value="ABB25619.1"/>
    <property type="molecule type" value="Genomic_DNA"/>
</dbReference>
<dbReference type="RefSeq" id="WP_011359463.1">
    <property type="nucleotide sequence ID" value="NC_007513.1"/>
</dbReference>
<dbReference type="SMR" id="Q3AZ58"/>
<dbReference type="STRING" id="316279.Syncc9902_0651"/>
<dbReference type="KEGG" id="sye:Syncc9902_0651"/>
<dbReference type="eggNOG" id="COG1791">
    <property type="taxonomic scope" value="Bacteria"/>
</dbReference>
<dbReference type="HOGENOM" id="CLU_125400_0_0_3"/>
<dbReference type="OrthoDB" id="9795636at2"/>
<dbReference type="UniPathway" id="UPA00904">
    <property type="reaction ID" value="UER00878"/>
</dbReference>
<dbReference type="Proteomes" id="UP000002712">
    <property type="component" value="Chromosome"/>
</dbReference>
<dbReference type="GO" id="GO:0010308">
    <property type="term" value="F:acireductone dioxygenase (Ni2+-requiring) activity"/>
    <property type="evidence" value="ECO:0007669"/>
    <property type="project" value="UniProtKB-UniRule"/>
</dbReference>
<dbReference type="GO" id="GO:0010309">
    <property type="term" value="F:acireductone dioxygenase [iron(II)-requiring] activity"/>
    <property type="evidence" value="ECO:0007669"/>
    <property type="project" value="UniProtKB-UniRule"/>
</dbReference>
<dbReference type="GO" id="GO:0005506">
    <property type="term" value="F:iron ion binding"/>
    <property type="evidence" value="ECO:0007669"/>
    <property type="project" value="UniProtKB-UniRule"/>
</dbReference>
<dbReference type="GO" id="GO:0016151">
    <property type="term" value="F:nickel cation binding"/>
    <property type="evidence" value="ECO:0007669"/>
    <property type="project" value="UniProtKB-UniRule"/>
</dbReference>
<dbReference type="GO" id="GO:0019509">
    <property type="term" value="P:L-methionine salvage from methylthioadenosine"/>
    <property type="evidence" value="ECO:0007669"/>
    <property type="project" value="UniProtKB-UniRule"/>
</dbReference>
<dbReference type="GO" id="GO:0019284">
    <property type="term" value="P:L-methionine salvage from S-adenosylmethionine"/>
    <property type="evidence" value="ECO:0007669"/>
    <property type="project" value="InterPro"/>
</dbReference>
<dbReference type="CDD" id="cd02232">
    <property type="entry name" value="cupin_ARD"/>
    <property type="match status" value="1"/>
</dbReference>
<dbReference type="Gene3D" id="2.60.120.10">
    <property type="entry name" value="Jelly Rolls"/>
    <property type="match status" value="1"/>
</dbReference>
<dbReference type="HAMAP" id="MF_01682">
    <property type="entry name" value="Salvage_MtnD"/>
    <property type="match status" value="1"/>
</dbReference>
<dbReference type="InterPro" id="IPR004313">
    <property type="entry name" value="ARD"/>
</dbReference>
<dbReference type="InterPro" id="IPR023956">
    <property type="entry name" value="ARD_bac"/>
</dbReference>
<dbReference type="InterPro" id="IPR014710">
    <property type="entry name" value="RmlC-like_jellyroll"/>
</dbReference>
<dbReference type="InterPro" id="IPR011051">
    <property type="entry name" value="RmlC_Cupin_sf"/>
</dbReference>
<dbReference type="PANTHER" id="PTHR23418">
    <property type="entry name" value="ACIREDUCTONE DIOXYGENASE"/>
    <property type="match status" value="1"/>
</dbReference>
<dbReference type="PANTHER" id="PTHR23418:SF0">
    <property type="entry name" value="ACIREDUCTONE DIOXYGENASE"/>
    <property type="match status" value="1"/>
</dbReference>
<dbReference type="Pfam" id="PF03079">
    <property type="entry name" value="ARD"/>
    <property type="match status" value="1"/>
</dbReference>
<dbReference type="SUPFAM" id="SSF51182">
    <property type="entry name" value="RmlC-like cupins"/>
    <property type="match status" value="1"/>
</dbReference>
<gene>
    <name evidence="1" type="primary">mtnD</name>
    <name type="ordered locus">Syncc9902_0651</name>
</gene>
<protein>
    <recommendedName>
        <fullName evidence="1">Acireductone dioxygenase</fullName>
    </recommendedName>
    <alternativeName>
        <fullName evidence="1">1,2-dihydroxy-3-keto-5-methylthiopentene dioxygenase</fullName>
        <shortName evidence="1">DHK-MTPene dioxygenase</shortName>
    </alternativeName>
    <alternativeName>
        <fullName evidence="1">Acireductone dioxygenase (Fe(2+)-requiring)</fullName>
        <shortName evidence="1">ARD'</shortName>
        <shortName evidence="1">Fe-ARD</shortName>
        <ecNumber evidence="1">1.13.11.54</ecNumber>
    </alternativeName>
    <alternativeName>
        <fullName evidence="1">Acireductone dioxygenase (Ni(2+)-requiring)</fullName>
        <shortName evidence="1">ARD</shortName>
        <shortName evidence="1">Ni-ARD</shortName>
        <ecNumber evidence="1">1.13.11.53</ecNumber>
    </alternativeName>
</protein>
<proteinExistence type="inferred from homology"/>
<accession>Q3AZ58</accession>
<reference key="1">
    <citation type="submission" date="2005-08" db="EMBL/GenBank/DDBJ databases">
        <title>Complete sequence of Synechococcus sp. CC9902.</title>
        <authorList>
            <person name="Copeland A."/>
            <person name="Lucas S."/>
            <person name="Lapidus A."/>
            <person name="Barry K."/>
            <person name="Detter J.C."/>
            <person name="Glavina T."/>
            <person name="Hammon N."/>
            <person name="Israni S."/>
            <person name="Pitluck S."/>
            <person name="Martinez M."/>
            <person name="Schmutz J."/>
            <person name="Larimer F."/>
            <person name="Land M."/>
            <person name="Kyrpides N."/>
            <person name="Ivanova N."/>
            <person name="Richardson P."/>
        </authorList>
    </citation>
    <scope>NUCLEOTIDE SEQUENCE [LARGE SCALE GENOMIC DNA]</scope>
    <source>
        <strain>CC9902</strain>
    </source>
</reference>
<keyword id="KW-0028">Amino-acid biosynthesis</keyword>
<keyword id="KW-0223">Dioxygenase</keyword>
<keyword id="KW-0408">Iron</keyword>
<keyword id="KW-0479">Metal-binding</keyword>
<keyword id="KW-0486">Methionine biosynthesis</keyword>
<keyword id="KW-0533">Nickel</keyword>
<keyword id="KW-0560">Oxidoreductase</keyword>
<keyword id="KW-1185">Reference proteome</keyword>
<sequence length="186" mass="20761">MSRLSIFPDGSTSMDQSSPTPLLVTETPAEIQAELARRGIGFEQWPALQELPLAADQSWILKAYANEIDRVKRDGGYATVDAIRMTPDHPERVALRSKFLAEHTHAEDEVRFFVEGRGLFCLHLGAEVLLTLCERGDLIRVPAGTKHWFDMGGQPAFCAVRWFNNAVGWVATFTGNTISERFPTLD</sequence>
<feature type="chain" id="PRO_0000359241" description="Acireductone dioxygenase">
    <location>
        <begin position="1"/>
        <end position="186"/>
    </location>
</feature>
<feature type="region of interest" description="Disordered" evidence="2">
    <location>
        <begin position="1"/>
        <end position="21"/>
    </location>
</feature>
<feature type="compositionally biased region" description="Polar residues" evidence="2">
    <location>
        <begin position="10"/>
        <end position="20"/>
    </location>
</feature>
<feature type="binding site" evidence="1">
    <location>
        <position position="103"/>
    </location>
    <ligand>
        <name>Fe(2+)</name>
        <dbReference type="ChEBI" id="CHEBI:29033"/>
    </ligand>
</feature>
<feature type="binding site" evidence="1">
    <location>
        <position position="103"/>
    </location>
    <ligand>
        <name>Ni(2+)</name>
        <dbReference type="ChEBI" id="CHEBI:49786"/>
    </ligand>
</feature>
<feature type="binding site" evidence="1">
    <location>
        <position position="105"/>
    </location>
    <ligand>
        <name>Fe(2+)</name>
        <dbReference type="ChEBI" id="CHEBI:29033"/>
    </ligand>
</feature>
<feature type="binding site" evidence="1">
    <location>
        <position position="105"/>
    </location>
    <ligand>
        <name>Ni(2+)</name>
        <dbReference type="ChEBI" id="CHEBI:49786"/>
    </ligand>
</feature>
<feature type="binding site" evidence="1">
    <location>
        <position position="109"/>
    </location>
    <ligand>
        <name>Fe(2+)</name>
        <dbReference type="ChEBI" id="CHEBI:29033"/>
    </ligand>
</feature>
<feature type="binding site" evidence="1">
    <location>
        <position position="109"/>
    </location>
    <ligand>
        <name>Ni(2+)</name>
        <dbReference type="ChEBI" id="CHEBI:49786"/>
    </ligand>
</feature>
<feature type="binding site" evidence="1">
    <location>
        <position position="147"/>
    </location>
    <ligand>
        <name>Fe(2+)</name>
        <dbReference type="ChEBI" id="CHEBI:29033"/>
    </ligand>
</feature>
<feature type="binding site" evidence="1">
    <location>
        <position position="147"/>
    </location>
    <ligand>
        <name>Ni(2+)</name>
        <dbReference type="ChEBI" id="CHEBI:49786"/>
    </ligand>
</feature>
<feature type="site" description="May play a role in metal incorporation in vivo" evidence="1">
    <location>
        <position position="102"/>
    </location>
</feature>
<feature type="site" description="May play a role in transmitting local conformational changes" evidence="1">
    <location>
        <position position="108"/>
    </location>
</feature>
<feature type="site" description="Important to generate the dianion" evidence="1">
    <location>
        <position position="111"/>
    </location>
</feature>
<comment type="function">
    <text evidence="1">Catalyzes 2 different reactions between oxygen and the acireductone 1,2-dihydroxy-3-keto-5-methylthiopentene (DHK-MTPene) depending upon the metal bound in the active site. Fe-containing acireductone dioxygenase (Fe-ARD) produces formate and 2-keto-4-methylthiobutyrate (KMTB), the alpha-ketoacid precursor of methionine in the methionine recycle pathway. Ni-containing acireductone dioxygenase (Ni-ARD) produces methylthiopropionate, carbon monoxide and formate, and does not lie on the methionine recycle pathway.</text>
</comment>
<comment type="catalytic activity">
    <reaction evidence="1">
        <text>1,2-dihydroxy-5-(methylsulfanyl)pent-1-en-3-one + O2 = 3-(methylsulfanyl)propanoate + CO + formate + 2 H(+)</text>
        <dbReference type="Rhea" id="RHEA:14161"/>
        <dbReference type="ChEBI" id="CHEBI:15378"/>
        <dbReference type="ChEBI" id="CHEBI:15379"/>
        <dbReference type="ChEBI" id="CHEBI:15740"/>
        <dbReference type="ChEBI" id="CHEBI:17245"/>
        <dbReference type="ChEBI" id="CHEBI:49016"/>
        <dbReference type="ChEBI" id="CHEBI:49252"/>
        <dbReference type="EC" id="1.13.11.53"/>
    </reaction>
</comment>
<comment type="catalytic activity">
    <reaction evidence="1">
        <text>1,2-dihydroxy-5-(methylsulfanyl)pent-1-en-3-one + O2 = 4-methylsulfanyl-2-oxobutanoate + formate + 2 H(+)</text>
        <dbReference type="Rhea" id="RHEA:24504"/>
        <dbReference type="ChEBI" id="CHEBI:15378"/>
        <dbReference type="ChEBI" id="CHEBI:15379"/>
        <dbReference type="ChEBI" id="CHEBI:15740"/>
        <dbReference type="ChEBI" id="CHEBI:16723"/>
        <dbReference type="ChEBI" id="CHEBI:49252"/>
        <dbReference type="EC" id="1.13.11.54"/>
    </reaction>
</comment>
<comment type="cofactor">
    <cofactor evidence="1">
        <name>Fe(2+)</name>
        <dbReference type="ChEBI" id="CHEBI:29033"/>
    </cofactor>
    <text evidence="1">Binds 1 Fe(2+) cation per monomer.</text>
</comment>
<comment type="cofactor">
    <cofactor evidence="1">
        <name>Ni(2+)</name>
        <dbReference type="ChEBI" id="CHEBI:49786"/>
    </cofactor>
    <text evidence="1">Binds 1 nickel ion per monomer.</text>
</comment>
<comment type="pathway">
    <text evidence="1">Amino-acid biosynthesis; L-methionine biosynthesis via salvage pathway; L-methionine from S-methyl-5-thio-alpha-D-ribose 1-phosphate: step 5/6.</text>
</comment>
<comment type="subunit">
    <text evidence="1">Monomer.</text>
</comment>
<comment type="similarity">
    <text evidence="1">Belongs to the acireductone dioxygenase (ARD) family.</text>
</comment>
<name>MTND_SYNS9</name>